<protein>
    <recommendedName>
        <fullName evidence="1">Ferredoxin--NADP reductase</fullName>
        <shortName evidence="1">FNR</shortName>
        <shortName evidence="1">Fd-NADP(+) reductase</shortName>
        <ecNumber evidence="1">1.18.1.2</ecNumber>
    </recommendedName>
</protein>
<organism>
    <name type="scientific">Bradyrhizobium sp. (strain BTAi1 / ATCC BAA-1182)</name>
    <dbReference type="NCBI Taxonomy" id="288000"/>
    <lineage>
        <taxon>Bacteria</taxon>
        <taxon>Pseudomonadati</taxon>
        <taxon>Pseudomonadota</taxon>
        <taxon>Alphaproteobacteria</taxon>
        <taxon>Hyphomicrobiales</taxon>
        <taxon>Nitrobacteraceae</taxon>
        <taxon>Bradyrhizobium</taxon>
    </lineage>
</organism>
<gene>
    <name type="ordered locus">BBta_5550</name>
</gene>
<reference key="1">
    <citation type="journal article" date="2007" name="Science">
        <title>Legumes symbioses: absence of nod genes in photosynthetic bradyrhizobia.</title>
        <authorList>
            <person name="Giraud E."/>
            <person name="Moulin L."/>
            <person name="Vallenet D."/>
            <person name="Barbe V."/>
            <person name="Cytryn E."/>
            <person name="Avarre J.-C."/>
            <person name="Jaubert M."/>
            <person name="Simon D."/>
            <person name="Cartieaux F."/>
            <person name="Prin Y."/>
            <person name="Bena G."/>
            <person name="Hannibal L."/>
            <person name="Fardoux J."/>
            <person name="Kojadinovic M."/>
            <person name="Vuillet L."/>
            <person name="Lajus A."/>
            <person name="Cruveiller S."/>
            <person name="Rouy Z."/>
            <person name="Mangenot S."/>
            <person name="Segurens B."/>
            <person name="Dossat C."/>
            <person name="Franck W.L."/>
            <person name="Chang W.-S."/>
            <person name="Saunders E."/>
            <person name="Bruce D."/>
            <person name="Richardson P."/>
            <person name="Normand P."/>
            <person name="Dreyfus B."/>
            <person name="Pignol D."/>
            <person name="Stacey G."/>
            <person name="Emerich D."/>
            <person name="Vermeglio A."/>
            <person name="Medigue C."/>
            <person name="Sadowsky M."/>
        </authorList>
    </citation>
    <scope>NUCLEOTIDE SEQUENCE [LARGE SCALE GENOMIC DNA]</scope>
    <source>
        <strain>BTAi1 / ATCC BAA-1182</strain>
    </source>
</reference>
<name>FENR_BRASB</name>
<comment type="catalytic activity">
    <reaction evidence="1">
        <text>2 reduced [2Fe-2S]-[ferredoxin] + NADP(+) + H(+) = 2 oxidized [2Fe-2S]-[ferredoxin] + NADPH</text>
        <dbReference type="Rhea" id="RHEA:20125"/>
        <dbReference type="Rhea" id="RHEA-COMP:10000"/>
        <dbReference type="Rhea" id="RHEA-COMP:10001"/>
        <dbReference type="ChEBI" id="CHEBI:15378"/>
        <dbReference type="ChEBI" id="CHEBI:33737"/>
        <dbReference type="ChEBI" id="CHEBI:33738"/>
        <dbReference type="ChEBI" id="CHEBI:57783"/>
        <dbReference type="ChEBI" id="CHEBI:58349"/>
        <dbReference type="EC" id="1.18.1.2"/>
    </reaction>
</comment>
<comment type="cofactor">
    <cofactor evidence="1">
        <name>FAD</name>
        <dbReference type="ChEBI" id="CHEBI:57692"/>
    </cofactor>
    <text evidence="1">Binds 1 FAD per subunit.</text>
</comment>
<comment type="subunit">
    <text evidence="1">Homodimer.</text>
</comment>
<comment type="similarity">
    <text evidence="1">Belongs to the ferredoxin--NADP reductase type 2 family.</text>
</comment>
<sequence length="342" mass="36949">MSEAIKTDVLIIGAGPCGLFAVFELGLLDIKAHLIDILDKVGGQCAELYPEKPIYDIPGVPMVTGQGLTDQLMEQIKPFSPTFHLGEMVEKVEKIGDPGFRVTTDAGKVFECKVVVIAAGGGSFQPKRPPVPGIEAYEGTSVFYAVRKMEQFRDKNVVIVGGGDSALDWTLNLHPLAKRITLVHRRDDFRAAPHSVEQMRALVASGKMDLRIGQVSALEGANGVLAAASIKGNDNSVETVACDMMLPFFGLTMKLGPVADWGIALENNLIPVETSAFETSVPGIFAIGDINTYPGKIKLILCGFHEGALMAQKAHRYVYPEKRLVFQYTTSSSSLQKKLGVN</sequence>
<keyword id="KW-0274">FAD</keyword>
<keyword id="KW-0285">Flavoprotein</keyword>
<keyword id="KW-0521">NADP</keyword>
<keyword id="KW-0560">Oxidoreductase</keyword>
<keyword id="KW-1185">Reference proteome</keyword>
<proteinExistence type="inferred from homology"/>
<accession>A5EMW5</accession>
<feature type="chain" id="PRO_0000364810" description="Ferredoxin--NADP reductase">
    <location>
        <begin position="1"/>
        <end position="342"/>
    </location>
</feature>
<feature type="binding site" evidence="1">
    <location>
        <position position="17"/>
    </location>
    <ligand>
        <name>FAD</name>
        <dbReference type="ChEBI" id="CHEBI:57692"/>
    </ligand>
</feature>
<feature type="binding site" evidence="1">
    <location>
        <position position="36"/>
    </location>
    <ligand>
        <name>FAD</name>
        <dbReference type="ChEBI" id="CHEBI:57692"/>
    </ligand>
</feature>
<feature type="binding site" evidence="1">
    <location>
        <position position="44"/>
    </location>
    <ligand>
        <name>FAD</name>
        <dbReference type="ChEBI" id="CHEBI:57692"/>
    </ligand>
</feature>
<feature type="binding site" evidence="1">
    <location>
        <position position="49"/>
    </location>
    <ligand>
        <name>FAD</name>
        <dbReference type="ChEBI" id="CHEBI:57692"/>
    </ligand>
</feature>
<feature type="binding site" evidence="1">
    <location>
        <position position="89"/>
    </location>
    <ligand>
        <name>FAD</name>
        <dbReference type="ChEBI" id="CHEBI:57692"/>
    </ligand>
</feature>
<feature type="binding site" evidence="1">
    <location>
        <position position="124"/>
    </location>
    <ligand>
        <name>FAD</name>
        <dbReference type="ChEBI" id="CHEBI:57692"/>
    </ligand>
</feature>
<feature type="binding site" evidence="1">
    <location>
        <position position="289"/>
    </location>
    <ligand>
        <name>FAD</name>
        <dbReference type="ChEBI" id="CHEBI:57692"/>
    </ligand>
</feature>
<feature type="binding site" evidence="1">
    <location>
        <position position="330"/>
    </location>
    <ligand>
        <name>FAD</name>
        <dbReference type="ChEBI" id="CHEBI:57692"/>
    </ligand>
</feature>
<dbReference type="EC" id="1.18.1.2" evidence="1"/>
<dbReference type="EMBL" id="CP000494">
    <property type="protein sequence ID" value="ABQ37509.1"/>
    <property type="molecule type" value="Genomic_DNA"/>
</dbReference>
<dbReference type="RefSeq" id="WP_012045469.1">
    <property type="nucleotide sequence ID" value="NC_009485.1"/>
</dbReference>
<dbReference type="SMR" id="A5EMW5"/>
<dbReference type="STRING" id="288000.BBta_5550"/>
<dbReference type="KEGG" id="bbt:BBta_5550"/>
<dbReference type="eggNOG" id="COG0492">
    <property type="taxonomic scope" value="Bacteria"/>
</dbReference>
<dbReference type="HOGENOM" id="CLU_031864_5_5_5"/>
<dbReference type="OrthoDB" id="9806179at2"/>
<dbReference type="Proteomes" id="UP000000246">
    <property type="component" value="Chromosome"/>
</dbReference>
<dbReference type="GO" id="GO:0004324">
    <property type="term" value="F:ferredoxin-NADP+ reductase activity"/>
    <property type="evidence" value="ECO:0007669"/>
    <property type="project" value="UniProtKB-UniRule"/>
</dbReference>
<dbReference type="GO" id="GO:0050660">
    <property type="term" value="F:flavin adenine dinucleotide binding"/>
    <property type="evidence" value="ECO:0007669"/>
    <property type="project" value="UniProtKB-UniRule"/>
</dbReference>
<dbReference type="GO" id="GO:0050661">
    <property type="term" value="F:NADP binding"/>
    <property type="evidence" value="ECO:0007669"/>
    <property type="project" value="UniProtKB-UniRule"/>
</dbReference>
<dbReference type="Gene3D" id="3.50.50.60">
    <property type="entry name" value="FAD/NAD(P)-binding domain"/>
    <property type="match status" value="2"/>
</dbReference>
<dbReference type="HAMAP" id="MF_01685">
    <property type="entry name" value="FENR2"/>
    <property type="match status" value="1"/>
</dbReference>
<dbReference type="InterPro" id="IPR036188">
    <property type="entry name" value="FAD/NAD-bd_sf"/>
</dbReference>
<dbReference type="InterPro" id="IPR023753">
    <property type="entry name" value="FAD/NAD-binding_dom"/>
</dbReference>
<dbReference type="InterPro" id="IPR022890">
    <property type="entry name" value="Fd--NADP_Rdtase_type_2"/>
</dbReference>
<dbReference type="InterPro" id="IPR050097">
    <property type="entry name" value="Ferredoxin-NADP_redctase_2"/>
</dbReference>
<dbReference type="PANTHER" id="PTHR48105">
    <property type="entry name" value="THIOREDOXIN REDUCTASE 1-RELATED-RELATED"/>
    <property type="match status" value="1"/>
</dbReference>
<dbReference type="Pfam" id="PF07992">
    <property type="entry name" value="Pyr_redox_2"/>
    <property type="match status" value="1"/>
</dbReference>
<dbReference type="PRINTS" id="PR00368">
    <property type="entry name" value="FADPNR"/>
</dbReference>
<dbReference type="PRINTS" id="PR00469">
    <property type="entry name" value="PNDRDTASEII"/>
</dbReference>
<dbReference type="SUPFAM" id="SSF51905">
    <property type="entry name" value="FAD/NAD(P)-binding domain"/>
    <property type="match status" value="1"/>
</dbReference>
<evidence type="ECO:0000255" key="1">
    <source>
        <dbReference type="HAMAP-Rule" id="MF_01685"/>
    </source>
</evidence>